<protein>
    <recommendedName>
        <fullName evidence="1">DNA integrity scanning protein DisA</fullName>
    </recommendedName>
    <alternativeName>
        <fullName evidence="1">Cyclic di-AMP synthase</fullName>
        <shortName evidence="1">c-di-AMP synthase</shortName>
    </alternativeName>
    <alternativeName>
        <fullName evidence="1">Diadenylate cyclase</fullName>
        <ecNumber evidence="1">2.7.7.85</ecNumber>
    </alternativeName>
</protein>
<organism>
    <name type="scientific">Fusobacterium nucleatum subsp. nucleatum (strain ATCC 25586 / DSM 15643 / BCRC 10681 / CIP 101130 / JCM 8532 / KCTC 2640 / LMG 13131 / VPI 4355)</name>
    <dbReference type="NCBI Taxonomy" id="190304"/>
    <lineage>
        <taxon>Bacteria</taxon>
        <taxon>Fusobacteriati</taxon>
        <taxon>Fusobacteriota</taxon>
        <taxon>Fusobacteriia</taxon>
        <taxon>Fusobacteriales</taxon>
        <taxon>Fusobacteriaceae</taxon>
        <taxon>Fusobacterium</taxon>
    </lineage>
</organism>
<name>DISA_FUSNN</name>
<sequence length="349" mass="39960">MTKQDLMDIIVKVAPGSPLREGVDYILDAGIGALIIIGYDDEVEKVRDGGFLIDCDYTPERIFELSKMDGAIILNDDCSKILYANVHVQPDNSYSTTESGTRHRTAERAAKHLKREVVAISERKKNVTLYKGNLKYRLKNFDELNIEVGQVLKTLESYRHVLNRSLDSLTILELDDLVTVLDVANTLQRFEMVRRISEEITRYLLELGSRGRLVNMQVSELIWDLDEEEESFLKDYIDDETDTDSVRRYLHSLSDSELLEVENVVVALGYSKSSSVFDNKIAAKGYRVLEKISKLTKKDVEKIVNTYKDISEIQEVTDEDFSAIKISKFKIKALRAGINRLKFTIEMQR</sequence>
<reference key="1">
    <citation type="journal article" date="2002" name="J. Bacteriol.">
        <title>Genome sequence and analysis of the oral bacterium Fusobacterium nucleatum strain ATCC 25586.</title>
        <authorList>
            <person name="Kapatral V."/>
            <person name="Anderson I."/>
            <person name="Ivanova N."/>
            <person name="Reznik G."/>
            <person name="Los T."/>
            <person name="Lykidis A."/>
            <person name="Bhattacharyya A."/>
            <person name="Bartman A."/>
            <person name="Gardner W."/>
            <person name="Grechkin G."/>
            <person name="Zhu L."/>
            <person name="Vasieva O."/>
            <person name="Chu L."/>
            <person name="Kogan Y."/>
            <person name="Chaga O."/>
            <person name="Goltsman E."/>
            <person name="Bernal A."/>
            <person name="Larsen N."/>
            <person name="D'Souza M."/>
            <person name="Walunas T."/>
            <person name="Pusch G."/>
            <person name="Haselkorn R."/>
            <person name="Fonstein M."/>
            <person name="Kyrpides N.C."/>
            <person name="Overbeek R."/>
        </authorList>
    </citation>
    <scope>NUCLEOTIDE SEQUENCE [LARGE SCALE GENOMIC DNA]</scope>
    <source>
        <strain>ATCC 25586 / DSM 15643 / BCRC 10681 / CIP 101130 / JCM 8532 / KCTC 2640 / LMG 13131 / VPI 4355</strain>
    </source>
</reference>
<gene>
    <name evidence="1" type="primary">disA</name>
    <name type="ordered locus">FN0158</name>
</gene>
<evidence type="ECO:0000255" key="1">
    <source>
        <dbReference type="HAMAP-Rule" id="MF_01438"/>
    </source>
</evidence>
<evidence type="ECO:0000255" key="2">
    <source>
        <dbReference type="PROSITE-ProRule" id="PRU01130"/>
    </source>
</evidence>
<proteinExistence type="inferred from homology"/>
<comment type="function">
    <text evidence="1">Participates in a DNA-damage check-point. DisA forms globular foci that rapidly scan along the chromosomes searching for lesions.</text>
</comment>
<comment type="function">
    <text evidence="1">Also has diadenylate cyclase activity, catalyzing the condensation of 2 ATP molecules into cyclic di-AMP (c-di-AMP). c-di-AMP likely acts as a signaling molecule that may couple DNA integrity with a cellular process.</text>
</comment>
<comment type="catalytic activity">
    <reaction evidence="1">
        <text>2 ATP = 3',3'-c-di-AMP + 2 diphosphate</text>
        <dbReference type="Rhea" id="RHEA:35655"/>
        <dbReference type="ChEBI" id="CHEBI:30616"/>
        <dbReference type="ChEBI" id="CHEBI:33019"/>
        <dbReference type="ChEBI" id="CHEBI:71500"/>
        <dbReference type="EC" id="2.7.7.85"/>
    </reaction>
</comment>
<comment type="cofactor">
    <cofactor evidence="1">
        <name>Mg(2+)</name>
        <dbReference type="ChEBI" id="CHEBI:18420"/>
    </cofactor>
</comment>
<comment type="subunit">
    <text evidence="1">Homooctamer.</text>
</comment>
<comment type="similarity">
    <text evidence="1">Belongs to the DisA family.</text>
</comment>
<accession>Q8RGW9</accession>
<feature type="chain" id="PRO_0000255646" description="DNA integrity scanning protein DisA">
    <location>
        <begin position="1"/>
        <end position="349"/>
    </location>
</feature>
<feature type="domain" description="DAC" evidence="2">
    <location>
        <begin position="3"/>
        <end position="143"/>
    </location>
</feature>
<feature type="binding site" evidence="1">
    <location>
        <position position="70"/>
    </location>
    <ligand>
        <name>ATP</name>
        <dbReference type="ChEBI" id="CHEBI:30616"/>
    </ligand>
</feature>
<feature type="binding site" evidence="1">
    <location>
        <position position="88"/>
    </location>
    <ligand>
        <name>ATP</name>
        <dbReference type="ChEBI" id="CHEBI:30616"/>
    </ligand>
</feature>
<feature type="binding site" evidence="1">
    <location>
        <begin position="101"/>
        <end position="105"/>
    </location>
    <ligand>
        <name>ATP</name>
        <dbReference type="ChEBI" id="CHEBI:30616"/>
    </ligand>
</feature>
<keyword id="KW-0067">ATP-binding</keyword>
<keyword id="KW-0227">DNA damage</keyword>
<keyword id="KW-0234">DNA repair</keyword>
<keyword id="KW-0238">DNA-binding</keyword>
<keyword id="KW-0460">Magnesium</keyword>
<keyword id="KW-0547">Nucleotide-binding</keyword>
<keyword id="KW-0548">Nucleotidyltransferase</keyword>
<keyword id="KW-1185">Reference proteome</keyword>
<keyword id="KW-0808">Transferase</keyword>
<dbReference type="EC" id="2.7.7.85" evidence="1"/>
<dbReference type="EMBL" id="AE009951">
    <property type="protein sequence ID" value="AAL94364.1"/>
    <property type="molecule type" value="Genomic_DNA"/>
</dbReference>
<dbReference type="RefSeq" id="NP_603065.1">
    <property type="nucleotide sequence ID" value="NC_003454.1"/>
</dbReference>
<dbReference type="RefSeq" id="WP_011016189.1">
    <property type="nucleotide sequence ID" value="NZ_OZ209243.1"/>
</dbReference>
<dbReference type="SMR" id="Q8RGW9"/>
<dbReference type="FunCoup" id="Q8RGW9">
    <property type="interactions" value="9"/>
</dbReference>
<dbReference type="STRING" id="190304.FN0158"/>
<dbReference type="PaxDb" id="190304-FN0158"/>
<dbReference type="EnsemblBacteria" id="AAL94364">
    <property type="protein sequence ID" value="AAL94364"/>
    <property type="gene ID" value="FN0158"/>
</dbReference>
<dbReference type="GeneID" id="79783178"/>
<dbReference type="KEGG" id="fnu:FN0158"/>
<dbReference type="PATRIC" id="fig|190304.8.peg.738"/>
<dbReference type="eggNOG" id="COG1623">
    <property type="taxonomic scope" value="Bacteria"/>
</dbReference>
<dbReference type="HOGENOM" id="CLU_787128_0_0_0"/>
<dbReference type="InParanoid" id="Q8RGW9"/>
<dbReference type="BioCyc" id="FNUC190304:G1FZS-761-MONOMER"/>
<dbReference type="Proteomes" id="UP000002521">
    <property type="component" value="Chromosome"/>
</dbReference>
<dbReference type="GO" id="GO:0004016">
    <property type="term" value="F:adenylate cyclase activity"/>
    <property type="evidence" value="ECO:0000318"/>
    <property type="project" value="GO_Central"/>
</dbReference>
<dbReference type="GO" id="GO:0005524">
    <property type="term" value="F:ATP binding"/>
    <property type="evidence" value="ECO:0007669"/>
    <property type="project" value="UniProtKB-UniRule"/>
</dbReference>
<dbReference type="GO" id="GO:0106408">
    <property type="term" value="F:diadenylate cyclase activity"/>
    <property type="evidence" value="ECO:0007669"/>
    <property type="project" value="UniProtKB-EC"/>
</dbReference>
<dbReference type="GO" id="GO:0003677">
    <property type="term" value="F:DNA binding"/>
    <property type="evidence" value="ECO:0007669"/>
    <property type="project" value="UniProtKB-UniRule"/>
</dbReference>
<dbReference type="GO" id="GO:0006281">
    <property type="term" value="P:DNA repair"/>
    <property type="evidence" value="ECO:0007669"/>
    <property type="project" value="UniProtKB-UniRule"/>
</dbReference>
<dbReference type="FunFam" id="3.40.1700.10:FF:000001">
    <property type="entry name" value="DNA integrity scanning protein DisA"/>
    <property type="match status" value="1"/>
</dbReference>
<dbReference type="Gene3D" id="1.10.150.20">
    <property type="entry name" value="5' to 3' exonuclease, C-terminal subdomain"/>
    <property type="match status" value="1"/>
</dbReference>
<dbReference type="Gene3D" id="1.20.1260.110">
    <property type="entry name" value="DNA integrity scanning linker region"/>
    <property type="match status" value="1"/>
</dbReference>
<dbReference type="Gene3D" id="3.40.1700.10">
    <property type="entry name" value="DNA integrity scanning protein, DisA, N-terminal domain"/>
    <property type="match status" value="1"/>
</dbReference>
<dbReference type="HAMAP" id="MF_01438">
    <property type="entry name" value="DisA"/>
    <property type="match status" value="1"/>
</dbReference>
<dbReference type="InterPro" id="IPR050338">
    <property type="entry name" value="DisA"/>
</dbReference>
<dbReference type="InterPro" id="IPR038331">
    <property type="entry name" value="DisA_sf"/>
</dbReference>
<dbReference type="InterPro" id="IPR036888">
    <property type="entry name" value="DNA_integrity_DisA_N_sf"/>
</dbReference>
<dbReference type="InterPro" id="IPR018906">
    <property type="entry name" value="DNA_integrity_scan_DisA_link"/>
</dbReference>
<dbReference type="InterPro" id="IPR003390">
    <property type="entry name" value="DNA_integrity_scan_DisA_N"/>
</dbReference>
<dbReference type="InterPro" id="IPR023763">
    <property type="entry name" value="DNA_integrity_scanning_protein"/>
</dbReference>
<dbReference type="NCBIfam" id="NF010009">
    <property type="entry name" value="PRK13482.1"/>
    <property type="match status" value="1"/>
</dbReference>
<dbReference type="PANTHER" id="PTHR34185">
    <property type="entry name" value="DIADENYLATE CYCLASE"/>
    <property type="match status" value="1"/>
</dbReference>
<dbReference type="PANTHER" id="PTHR34185:SF3">
    <property type="entry name" value="DNA INTEGRITY SCANNING PROTEIN DISA"/>
    <property type="match status" value="1"/>
</dbReference>
<dbReference type="Pfam" id="PF02457">
    <property type="entry name" value="DAC"/>
    <property type="match status" value="1"/>
</dbReference>
<dbReference type="Pfam" id="PF10635">
    <property type="entry name" value="DisA-linker"/>
    <property type="match status" value="1"/>
</dbReference>
<dbReference type="SUPFAM" id="SSF143597">
    <property type="entry name" value="YojJ-like"/>
    <property type="match status" value="1"/>
</dbReference>
<dbReference type="PROSITE" id="PS51794">
    <property type="entry name" value="DAC"/>
    <property type="match status" value="1"/>
</dbReference>